<protein>
    <recommendedName>
        <fullName>PBSX phage terminase small subunit</fullName>
    </recommendedName>
</protein>
<keyword id="KW-1185">Reference proteome</keyword>
<keyword id="KW-0231">Viral genome packaging</keyword>
<keyword id="KW-1188">Viral release from host cell</keyword>
<dbReference type="EMBL" id="Z70177">
    <property type="protein sequence ID" value="CAA94058.1"/>
    <property type="molecule type" value="Genomic_DNA"/>
</dbReference>
<dbReference type="EMBL" id="Z34287">
    <property type="protein sequence ID" value="CAA84047.1"/>
    <property type="status" value="ALT_FRAME"/>
    <property type="molecule type" value="Genomic_DNA"/>
</dbReference>
<dbReference type="EMBL" id="AL009126">
    <property type="protein sequence ID" value="CAB13114.1"/>
    <property type="molecule type" value="Genomic_DNA"/>
</dbReference>
<dbReference type="PIR" id="H69734">
    <property type="entry name" value="H69734"/>
</dbReference>
<dbReference type="RefSeq" id="NP_389139.1">
    <property type="nucleotide sequence ID" value="NC_000964.3"/>
</dbReference>
<dbReference type="RefSeq" id="WP_003244697.1">
    <property type="nucleotide sequence ID" value="NZ_OZ025638.1"/>
</dbReference>
<dbReference type="SMR" id="P39785"/>
<dbReference type="FunCoup" id="P39785">
    <property type="interactions" value="47"/>
</dbReference>
<dbReference type="STRING" id="224308.BSU12570"/>
<dbReference type="PaxDb" id="224308-BSU12570"/>
<dbReference type="EnsemblBacteria" id="CAB13114">
    <property type="protein sequence ID" value="CAB13114"/>
    <property type="gene ID" value="BSU_12570"/>
</dbReference>
<dbReference type="GeneID" id="939835"/>
<dbReference type="KEGG" id="bsu:BSU12570"/>
<dbReference type="PATRIC" id="fig|224308.179.peg.1361"/>
<dbReference type="eggNOG" id="COG3728">
    <property type="taxonomic scope" value="Bacteria"/>
</dbReference>
<dbReference type="eggNOG" id="COG5484">
    <property type="taxonomic scope" value="Bacteria"/>
</dbReference>
<dbReference type="InParanoid" id="P39785"/>
<dbReference type="OrthoDB" id="7358785at2"/>
<dbReference type="PhylomeDB" id="P39785"/>
<dbReference type="BioCyc" id="BSUB:BSU12570-MONOMER"/>
<dbReference type="Proteomes" id="UP000001570">
    <property type="component" value="Chromosome"/>
</dbReference>
<dbReference type="GO" id="GO:0051276">
    <property type="term" value="P:chromosome organization"/>
    <property type="evidence" value="ECO:0007669"/>
    <property type="project" value="InterPro"/>
</dbReference>
<dbReference type="Gene3D" id="1.10.10.1400">
    <property type="entry name" value="Terminase, small subunit, N-terminal DNA-binding domain, HTH motif"/>
    <property type="match status" value="1"/>
</dbReference>
<dbReference type="InterPro" id="IPR052404">
    <property type="entry name" value="SPP1-like_terminase"/>
</dbReference>
<dbReference type="InterPro" id="IPR038713">
    <property type="entry name" value="Terminase_Gp1_N_sf"/>
</dbReference>
<dbReference type="InterPro" id="IPR005335">
    <property type="entry name" value="Terminase_ssu"/>
</dbReference>
<dbReference type="InterPro" id="IPR018925">
    <property type="entry name" value="XtmA-like_N"/>
</dbReference>
<dbReference type="PANTHER" id="PTHR41328:SF3">
    <property type="entry name" value="PBSX PHAGE TERMINASE SMALL SUBUNIT"/>
    <property type="match status" value="1"/>
</dbReference>
<dbReference type="PANTHER" id="PTHR41328">
    <property type="entry name" value="TERMINASE SMALL SUBUNIT-RELATED"/>
    <property type="match status" value="1"/>
</dbReference>
<dbReference type="Pfam" id="PF10668">
    <property type="entry name" value="Phage_terminase"/>
    <property type="match status" value="1"/>
</dbReference>
<dbReference type="Pfam" id="PF03592">
    <property type="entry name" value="Terminase_2"/>
    <property type="match status" value="1"/>
</dbReference>
<comment type="function">
    <text>Functions as a terminase.</text>
</comment>
<comment type="subunit">
    <text evidence="2">Dimer of a small and a large subunit.</text>
</comment>
<comment type="similarity">
    <text evidence="2">To B.subtilis YqaS and B.subtilis phage SPP1 terminase small subunit.</text>
</comment>
<comment type="sequence caution" evidence="2">
    <conflict type="frameshift">
        <sequence resource="EMBL-CDS" id="CAA84047"/>
    </conflict>
</comment>
<proteinExistence type="predicted"/>
<gene>
    <name type="primary">xtmA</name>
    <name type="synonym">ykxF</name>
    <name type="ordered locus">BSU12570</name>
</gene>
<feature type="chain" id="PRO_0000066051" description="PBSX phage terminase small subunit">
    <location>
        <begin position="1"/>
        <end position="265"/>
    </location>
</feature>
<feature type="region of interest" description="Disordered" evidence="1">
    <location>
        <begin position="241"/>
        <end position="265"/>
    </location>
</feature>
<organism>
    <name type="scientific">Bacillus subtilis (strain 168)</name>
    <dbReference type="NCBI Taxonomy" id="224308"/>
    <lineage>
        <taxon>Bacteria</taxon>
        <taxon>Bacillati</taxon>
        <taxon>Bacillota</taxon>
        <taxon>Bacilli</taxon>
        <taxon>Bacillales</taxon>
        <taxon>Bacillaceae</taxon>
        <taxon>Bacillus</taxon>
    </lineage>
</organism>
<sequence>MKTQQREQALAIYQQHQGKITNRAIADTIGVSAKTIGIWKKQDKWKEALFSASKNEQKQRPINNDELNERQRLFCLYYVKSFNATQSAIKAGYSPDSAHVTGSRLLKNEKVAAEIRRIKKEMVNEMFIEAMDVLQVYIKIAFADITDYVTFGKKEVQAVGKSGPLFDEDDNPIMKEISFVDVKDSGLVDGTIVTEAKLGKEGIAIKLADKMKALEKLSLYFDLFPDQFKQKIENEKLKLAKQKAEKTDDSQEPIEIMIKRKERKS</sequence>
<name>XTMA_BACSU</name>
<accession>P39785</accession>
<reference key="1">
    <citation type="submission" date="1996-03" db="EMBL/GenBank/DDBJ databases">
        <authorList>
            <person name="Krogh S."/>
            <person name="O'Reilly M."/>
            <person name="Nolan N."/>
            <person name="Devine K.M."/>
        </authorList>
    </citation>
    <scope>NUCLEOTIDE SEQUENCE [GENOMIC DNA]</scope>
    <source>
        <strain>168</strain>
    </source>
</reference>
<reference key="2">
    <citation type="journal article" date="1994" name="J. Bacteriol.">
        <title>Genetic control of bacterial suicide: regulation of the induction of PBSX in Bacillus subtilis.</title>
        <authorList>
            <person name="McDonnell G.E."/>
            <person name="Wood H."/>
            <person name="Devine K.M."/>
            <person name="McConnell D.J."/>
        </authorList>
    </citation>
    <scope>NUCLEOTIDE SEQUENCE [GENOMIC DNA]</scope>
    <source>
        <strain>168 / SO113</strain>
    </source>
</reference>
<reference key="3">
    <citation type="journal article" date="1997" name="Nature">
        <title>The complete genome sequence of the Gram-positive bacterium Bacillus subtilis.</title>
        <authorList>
            <person name="Kunst F."/>
            <person name="Ogasawara N."/>
            <person name="Moszer I."/>
            <person name="Albertini A.M."/>
            <person name="Alloni G."/>
            <person name="Azevedo V."/>
            <person name="Bertero M.G."/>
            <person name="Bessieres P."/>
            <person name="Bolotin A."/>
            <person name="Borchert S."/>
            <person name="Borriss R."/>
            <person name="Boursier L."/>
            <person name="Brans A."/>
            <person name="Braun M."/>
            <person name="Brignell S.C."/>
            <person name="Bron S."/>
            <person name="Brouillet S."/>
            <person name="Bruschi C.V."/>
            <person name="Caldwell B."/>
            <person name="Capuano V."/>
            <person name="Carter N.M."/>
            <person name="Choi S.-K."/>
            <person name="Codani J.-J."/>
            <person name="Connerton I.F."/>
            <person name="Cummings N.J."/>
            <person name="Daniel R.A."/>
            <person name="Denizot F."/>
            <person name="Devine K.M."/>
            <person name="Duesterhoeft A."/>
            <person name="Ehrlich S.D."/>
            <person name="Emmerson P.T."/>
            <person name="Entian K.-D."/>
            <person name="Errington J."/>
            <person name="Fabret C."/>
            <person name="Ferrari E."/>
            <person name="Foulger D."/>
            <person name="Fritz C."/>
            <person name="Fujita M."/>
            <person name="Fujita Y."/>
            <person name="Fuma S."/>
            <person name="Galizzi A."/>
            <person name="Galleron N."/>
            <person name="Ghim S.-Y."/>
            <person name="Glaser P."/>
            <person name="Goffeau A."/>
            <person name="Golightly E.J."/>
            <person name="Grandi G."/>
            <person name="Guiseppi G."/>
            <person name="Guy B.J."/>
            <person name="Haga K."/>
            <person name="Haiech J."/>
            <person name="Harwood C.R."/>
            <person name="Henaut A."/>
            <person name="Hilbert H."/>
            <person name="Holsappel S."/>
            <person name="Hosono S."/>
            <person name="Hullo M.-F."/>
            <person name="Itaya M."/>
            <person name="Jones L.-M."/>
            <person name="Joris B."/>
            <person name="Karamata D."/>
            <person name="Kasahara Y."/>
            <person name="Klaerr-Blanchard M."/>
            <person name="Klein C."/>
            <person name="Kobayashi Y."/>
            <person name="Koetter P."/>
            <person name="Koningstein G."/>
            <person name="Krogh S."/>
            <person name="Kumano M."/>
            <person name="Kurita K."/>
            <person name="Lapidus A."/>
            <person name="Lardinois S."/>
            <person name="Lauber J."/>
            <person name="Lazarevic V."/>
            <person name="Lee S.-M."/>
            <person name="Levine A."/>
            <person name="Liu H."/>
            <person name="Masuda S."/>
            <person name="Mauel C."/>
            <person name="Medigue C."/>
            <person name="Medina N."/>
            <person name="Mellado R.P."/>
            <person name="Mizuno M."/>
            <person name="Moestl D."/>
            <person name="Nakai S."/>
            <person name="Noback M."/>
            <person name="Noone D."/>
            <person name="O'Reilly M."/>
            <person name="Ogawa K."/>
            <person name="Ogiwara A."/>
            <person name="Oudega B."/>
            <person name="Park S.-H."/>
            <person name="Parro V."/>
            <person name="Pohl T.M."/>
            <person name="Portetelle D."/>
            <person name="Porwollik S."/>
            <person name="Prescott A.M."/>
            <person name="Presecan E."/>
            <person name="Pujic P."/>
            <person name="Purnelle B."/>
            <person name="Rapoport G."/>
            <person name="Rey M."/>
            <person name="Reynolds S."/>
            <person name="Rieger M."/>
            <person name="Rivolta C."/>
            <person name="Rocha E."/>
            <person name="Roche B."/>
            <person name="Rose M."/>
            <person name="Sadaie Y."/>
            <person name="Sato T."/>
            <person name="Scanlan E."/>
            <person name="Schleich S."/>
            <person name="Schroeter R."/>
            <person name="Scoffone F."/>
            <person name="Sekiguchi J."/>
            <person name="Sekowska A."/>
            <person name="Seror S.J."/>
            <person name="Serror P."/>
            <person name="Shin B.-S."/>
            <person name="Soldo B."/>
            <person name="Sorokin A."/>
            <person name="Tacconi E."/>
            <person name="Takagi T."/>
            <person name="Takahashi H."/>
            <person name="Takemaru K."/>
            <person name="Takeuchi M."/>
            <person name="Tamakoshi A."/>
            <person name="Tanaka T."/>
            <person name="Terpstra P."/>
            <person name="Tognoni A."/>
            <person name="Tosato V."/>
            <person name="Uchiyama S."/>
            <person name="Vandenbol M."/>
            <person name="Vannier F."/>
            <person name="Vassarotti A."/>
            <person name="Viari A."/>
            <person name="Wambutt R."/>
            <person name="Wedler E."/>
            <person name="Wedler H."/>
            <person name="Weitzenegger T."/>
            <person name="Winters P."/>
            <person name="Wipat A."/>
            <person name="Yamamoto H."/>
            <person name="Yamane K."/>
            <person name="Yasumoto K."/>
            <person name="Yata K."/>
            <person name="Yoshida K."/>
            <person name="Yoshikawa H.-F."/>
            <person name="Zumstein E."/>
            <person name="Yoshikawa H."/>
            <person name="Danchin A."/>
        </authorList>
    </citation>
    <scope>NUCLEOTIDE SEQUENCE [LARGE SCALE GENOMIC DNA]</scope>
    <source>
        <strain>168</strain>
    </source>
</reference>
<evidence type="ECO:0000256" key="1">
    <source>
        <dbReference type="SAM" id="MobiDB-lite"/>
    </source>
</evidence>
<evidence type="ECO:0000305" key="2"/>